<keyword id="KW-1185">Reference proteome</keyword>
<reference key="1">
    <citation type="journal article" date="1996" name="Science">
        <title>Complete genome sequence of the methanogenic archaeon, Methanococcus jannaschii.</title>
        <authorList>
            <person name="Bult C.J."/>
            <person name="White O."/>
            <person name="Olsen G.J."/>
            <person name="Zhou L."/>
            <person name="Fleischmann R.D."/>
            <person name="Sutton G.G."/>
            <person name="Blake J.A."/>
            <person name="FitzGerald L.M."/>
            <person name="Clayton R.A."/>
            <person name="Gocayne J.D."/>
            <person name="Kerlavage A.R."/>
            <person name="Dougherty B.A."/>
            <person name="Tomb J.-F."/>
            <person name="Adams M.D."/>
            <person name="Reich C.I."/>
            <person name="Overbeek R."/>
            <person name="Kirkness E.F."/>
            <person name="Weinstock K.G."/>
            <person name="Merrick J.M."/>
            <person name="Glodek A."/>
            <person name="Scott J.L."/>
            <person name="Geoghagen N.S.M."/>
            <person name="Weidman J.F."/>
            <person name="Fuhrmann J.L."/>
            <person name="Nguyen D."/>
            <person name="Utterback T.R."/>
            <person name="Kelley J.M."/>
            <person name="Peterson J.D."/>
            <person name="Sadow P.W."/>
            <person name="Hanna M.C."/>
            <person name="Cotton M.D."/>
            <person name="Roberts K.M."/>
            <person name="Hurst M.A."/>
            <person name="Kaine B.P."/>
            <person name="Borodovsky M."/>
            <person name="Klenk H.-P."/>
            <person name="Fraser C.M."/>
            <person name="Smith H.O."/>
            <person name="Woese C.R."/>
            <person name="Venter J.C."/>
        </authorList>
    </citation>
    <scope>NUCLEOTIDE SEQUENCE [LARGE SCALE GENOMIC DNA]</scope>
    <source>
        <strain>ATCC 43067 / DSM 2661 / JAL-1 / JCM 10045 / NBRC 100440</strain>
    </source>
</reference>
<proteinExistence type="predicted"/>
<feature type="chain" id="PRO_0000107385" description="Uncharacterized protein MJ1513">
    <location>
        <begin position="1"/>
        <end position="335"/>
    </location>
</feature>
<name>Y1513_METJA</name>
<gene>
    <name type="ordered locus">MJ1513</name>
</gene>
<accession>Q58908</accession>
<protein>
    <recommendedName>
        <fullName>Uncharacterized protein MJ1513</fullName>
    </recommendedName>
</protein>
<dbReference type="EMBL" id="L77117">
    <property type="protein sequence ID" value="AAB99535.1"/>
    <property type="molecule type" value="Genomic_DNA"/>
</dbReference>
<dbReference type="PIR" id="H64488">
    <property type="entry name" value="H64488"/>
</dbReference>
<dbReference type="SMR" id="Q58908"/>
<dbReference type="FunCoup" id="Q58908">
    <property type="interactions" value="2"/>
</dbReference>
<dbReference type="STRING" id="243232.MJ_1513"/>
<dbReference type="PaxDb" id="243232-MJ_1513"/>
<dbReference type="EnsemblBacteria" id="AAB99535">
    <property type="protein sequence ID" value="AAB99535"/>
    <property type="gene ID" value="MJ_1513"/>
</dbReference>
<dbReference type="KEGG" id="mja:MJ_1513"/>
<dbReference type="eggNOG" id="arCOG01449">
    <property type="taxonomic scope" value="Archaea"/>
</dbReference>
<dbReference type="HOGENOM" id="CLU_907966_0_0_2"/>
<dbReference type="InParanoid" id="Q58908"/>
<dbReference type="Proteomes" id="UP000000805">
    <property type="component" value="Chromosome"/>
</dbReference>
<dbReference type="InterPro" id="IPR046260">
    <property type="entry name" value="HFX_2341-like_N"/>
</dbReference>
<dbReference type="Pfam" id="PF19810">
    <property type="entry name" value="HFX_2341_N"/>
    <property type="match status" value="1"/>
</dbReference>
<organism>
    <name type="scientific">Methanocaldococcus jannaschii (strain ATCC 43067 / DSM 2661 / JAL-1 / JCM 10045 / NBRC 100440)</name>
    <name type="common">Methanococcus jannaschii</name>
    <dbReference type="NCBI Taxonomy" id="243232"/>
    <lineage>
        <taxon>Archaea</taxon>
        <taxon>Methanobacteriati</taxon>
        <taxon>Methanobacteriota</taxon>
        <taxon>Methanomada group</taxon>
        <taxon>Methanococci</taxon>
        <taxon>Methanococcales</taxon>
        <taxon>Methanocaldococcaceae</taxon>
        <taxon>Methanocaldococcus</taxon>
    </lineage>
</organism>
<sequence>MSKMTNDLEKIRGGVHIAVQGYEVDRITEVPIMRRAEKVYLICKPGNNDSKRGKAFKNVIIKKFEEKRVNYEIVEADLFDLDDIVKKMKLIIAHERKEFGDVKFYINVSSGSTIGCIAGITCAMILNKENSRIIPYYVMPEKSLDGLSEKEKEELKKEYESKYNCPYLPRSFGVRGVKLIYPFEVTLPREELLIFLKFIGRAGNRGLTIKELSILTKEEFLNVDLNDNESIKELIKAVERKESVSNSSVKKMKNLVRELKEVVGSDVDDLKKIITWRKKCRSSVSSTGQSDLVWVNKNVVEKLLELELIEKPEKIGKSKYIRISEKGKMLLNYVG</sequence>